<protein>
    <recommendedName>
        <fullName>NADH-ubiquinone oxidoreductase chain 4L</fullName>
        <ecNumber>7.1.1.2</ecNumber>
    </recommendedName>
    <alternativeName>
        <fullName>NADH dehydrogenase subunit 4L</fullName>
    </alternativeName>
</protein>
<keyword id="KW-0249">Electron transport</keyword>
<keyword id="KW-0472">Membrane</keyword>
<keyword id="KW-0496">Mitochondrion</keyword>
<keyword id="KW-0999">Mitochondrion inner membrane</keyword>
<keyword id="KW-0520">NAD</keyword>
<keyword id="KW-1185">Reference proteome</keyword>
<keyword id="KW-0679">Respiratory chain</keyword>
<keyword id="KW-1278">Translocase</keyword>
<keyword id="KW-0812">Transmembrane</keyword>
<keyword id="KW-1133">Transmembrane helix</keyword>
<keyword id="KW-0813">Transport</keyword>
<keyword id="KW-0830">Ubiquinone</keyword>
<comment type="function">
    <text evidence="1">Core subunit of the mitochondrial membrane respiratory chain NADH dehydrogenase (Complex I) which catalyzes electron transfer from NADH through the respiratory chain, using ubiquinone as an electron acceptor. Part of the enzyme membrane arm which is embedded in the lipid bilayer and involved in proton translocation.</text>
</comment>
<comment type="catalytic activity">
    <reaction evidence="1">
        <text>a ubiquinone + NADH + 5 H(+)(in) = a ubiquinol + NAD(+) + 4 H(+)(out)</text>
        <dbReference type="Rhea" id="RHEA:29091"/>
        <dbReference type="Rhea" id="RHEA-COMP:9565"/>
        <dbReference type="Rhea" id="RHEA-COMP:9566"/>
        <dbReference type="ChEBI" id="CHEBI:15378"/>
        <dbReference type="ChEBI" id="CHEBI:16389"/>
        <dbReference type="ChEBI" id="CHEBI:17976"/>
        <dbReference type="ChEBI" id="CHEBI:57540"/>
        <dbReference type="ChEBI" id="CHEBI:57945"/>
        <dbReference type="EC" id="7.1.1.2"/>
    </reaction>
    <physiologicalReaction direction="left-to-right" evidence="1">
        <dbReference type="Rhea" id="RHEA:29092"/>
    </physiologicalReaction>
</comment>
<comment type="subunit">
    <text evidence="2">Core subunit of respiratory chain NADH dehydrogenase (Complex I) which is composed of 45 different subunits.</text>
</comment>
<comment type="subcellular location">
    <subcellularLocation>
        <location evidence="2">Mitochondrion inner membrane</location>
        <topology evidence="3">Multi-pass membrane protein</topology>
    </subcellularLocation>
</comment>
<comment type="similarity">
    <text evidence="4">Belongs to the complex I subunit 4L family.</text>
</comment>
<feature type="chain" id="PRO_0000118407" description="NADH-ubiquinone oxidoreductase chain 4L">
    <location>
        <begin position="1"/>
        <end position="98"/>
    </location>
</feature>
<feature type="transmembrane region" description="Helical" evidence="3">
    <location>
        <begin position="1"/>
        <end position="21"/>
    </location>
</feature>
<feature type="transmembrane region" description="Helical" evidence="3">
    <location>
        <begin position="26"/>
        <end position="46"/>
    </location>
</feature>
<feature type="transmembrane region" description="Helical" evidence="3">
    <location>
        <begin position="56"/>
        <end position="76"/>
    </location>
</feature>
<name>NU4LM_CHICK</name>
<organism>
    <name type="scientific">Gallus gallus</name>
    <name type="common">Chicken</name>
    <dbReference type="NCBI Taxonomy" id="9031"/>
    <lineage>
        <taxon>Eukaryota</taxon>
        <taxon>Metazoa</taxon>
        <taxon>Chordata</taxon>
        <taxon>Craniata</taxon>
        <taxon>Vertebrata</taxon>
        <taxon>Euteleostomi</taxon>
        <taxon>Archelosauria</taxon>
        <taxon>Archosauria</taxon>
        <taxon>Dinosauria</taxon>
        <taxon>Saurischia</taxon>
        <taxon>Theropoda</taxon>
        <taxon>Coelurosauria</taxon>
        <taxon>Aves</taxon>
        <taxon>Neognathae</taxon>
        <taxon>Galloanserae</taxon>
        <taxon>Galliformes</taxon>
        <taxon>Phasianidae</taxon>
        <taxon>Phasianinae</taxon>
        <taxon>Gallus</taxon>
    </lineage>
</organism>
<dbReference type="EC" id="7.1.1.2"/>
<dbReference type="EMBL" id="X52392">
    <property type="protein sequence ID" value="CAA36633.1"/>
    <property type="molecule type" value="Genomic_DNA"/>
</dbReference>
<dbReference type="PIR" id="S10195">
    <property type="entry name" value="S10195"/>
</dbReference>
<dbReference type="RefSeq" id="NP_006923.1">
    <property type="nucleotide sequence ID" value="NC_001323.1"/>
</dbReference>
<dbReference type="SMR" id="P18942"/>
<dbReference type="FunCoup" id="P18942">
    <property type="interactions" value="106"/>
</dbReference>
<dbReference type="STRING" id="9031.ENSGALP00000053436"/>
<dbReference type="PaxDb" id="9031-ENSGALP00000034620"/>
<dbReference type="Ensembl" id="ENSGALT00010000028.1">
    <property type="protein sequence ID" value="ENSGALP00010000010.1"/>
    <property type="gene ID" value="ENSGALG00010000028.1"/>
</dbReference>
<dbReference type="VEuPathDB" id="HostDB:geneid_63549492"/>
<dbReference type="eggNOG" id="KOG4669">
    <property type="taxonomic scope" value="Eukaryota"/>
</dbReference>
<dbReference type="GeneTree" id="ENSGT00940000164968"/>
<dbReference type="HOGENOM" id="CLU_182394_0_0_1"/>
<dbReference type="InParanoid" id="P18942"/>
<dbReference type="OMA" id="MYRSHLM"/>
<dbReference type="OrthoDB" id="6146597at2759"/>
<dbReference type="PhylomeDB" id="P18942"/>
<dbReference type="TreeFam" id="TF338190"/>
<dbReference type="PRO" id="PR:P18942"/>
<dbReference type="Proteomes" id="UP000000539">
    <property type="component" value="Mitochondrion MT"/>
</dbReference>
<dbReference type="Bgee" id="ENSGALG00000042478">
    <property type="expression patterns" value="Expressed in heart and 13 other cell types or tissues"/>
</dbReference>
<dbReference type="GO" id="GO:0005743">
    <property type="term" value="C:mitochondrial inner membrane"/>
    <property type="evidence" value="ECO:0000250"/>
    <property type="project" value="UniProtKB"/>
</dbReference>
<dbReference type="GO" id="GO:0045271">
    <property type="term" value="C:respiratory chain complex I"/>
    <property type="evidence" value="ECO:0000250"/>
    <property type="project" value="UniProtKB"/>
</dbReference>
<dbReference type="GO" id="GO:0008137">
    <property type="term" value="F:NADH dehydrogenase (ubiquinone) activity"/>
    <property type="evidence" value="ECO:0000250"/>
    <property type="project" value="UniProtKB"/>
</dbReference>
<dbReference type="GO" id="GO:0042773">
    <property type="term" value="P:ATP synthesis coupled electron transport"/>
    <property type="evidence" value="ECO:0007669"/>
    <property type="project" value="InterPro"/>
</dbReference>
<dbReference type="FunFam" id="1.10.287.3510:FF:000002">
    <property type="entry name" value="NADH-ubiquinone oxidoreductase chain 4L"/>
    <property type="match status" value="1"/>
</dbReference>
<dbReference type="Gene3D" id="1.10.287.3510">
    <property type="match status" value="1"/>
</dbReference>
<dbReference type="InterPro" id="IPR001133">
    <property type="entry name" value="NADH_UbQ_OxRdtase_chain4L/K"/>
</dbReference>
<dbReference type="InterPro" id="IPR039428">
    <property type="entry name" value="NUOK/Mnh_C1-like"/>
</dbReference>
<dbReference type="PANTHER" id="PTHR11434:SF0">
    <property type="entry name" value="NADH-UBIQUINONE OXIDOREDUCTASE CHAIN 4L"/>
    <property type="match status" value="1"/>
</dbReference>
<dbReference type="PANTHER" id="PTHR11434">
    <property type="entry name" value="NADH-UBIQUINONE OXIDOREDUCTASE SUBUNIT ND4L"/>
    <property type="match status" value="1"/>
</dbReference>
<dbReference type="Pfam" id="PF00420">
    <property type="entry name" value="Oxidored_q2"/>
    <property type="match status" value="1"/>
</dbReference>
<reference key="1">
    <citation type="journal article" date="1990" name="J. Mol. Biol.">
        <title>Sequence and gene organization of the chicken mitochondrial genome. A novel gene order in higher vertebrates.</title>
        <authorList>
            <person name="Desjardins P."/>
            <person name="Morais R."/>
        </authorList>
    </citation>
    <scope>NUCLEOTIDE SEQUENCE [GENOMIC DNA]</scope>
    <source>
        <strain evidence="5">Red jungle fowl</strain>
    </source>
</reference>
<sequence length="98" mass="10727">MSPLHFSFYSAFTFSSLGLAFHRTHLISALLCLESMMLSMFIPLSIWPVENQTPSFALVPILMLAFSACEAGTGLAMLVASARTHGSDHLHNLNLLQC</sequence>
<geneLocation type="mitochondrion"/>
<accession>P18942</accession>
<proteinExistence type="inferred from homology"/>
<evidence type="ECO:0000250" key="1">
    <source>
        <dbReference type="UniProtKB" id="P03901"/>
    </source>
</evidence>
<evidence type="ECO:0000250" key="2">
    <source>
        <dbReference type="UniProtKB" id="P03902"/>
    </source>
</evidence>
<evidence type="ECO:0000255" key="3"/>
<evidence type="ECO:0000305" key="4"/>
<evidence type="ECO:0000312" key="5">
    <source>
        <dbReference type="Proteomes" id="UP000000539"/>
    </source>
</evidence>
<gene>
    <name type="primary">MT-ND4L</name>
    <name type="synonym">MTND4L</name>
    <name type="synonym">NADH4L</name>
    <name type="synonym">ND4L</name>
</gene>